<protein>
    <recommendedName>
        <fullName evidence="1">Anhydro-N-acetylmuramic acid kinase</fullName>
        <ecNumber evidence="1">2.7.1.170</ecNumber>
    </recommendedName>
    <alternativeName>
        <fullName evidence="1">AnhMurNAc kinase</fullName>
    </alternativeName>
</protein>
<name>ANMK_NEIM0</name>
<feature type="chain" id="PRO_1000165167" description="Anhydro-N-acetylmuramic acid kinase">
    <location>
        <begin position="1"/>
        <end position="366"/>
    </location>
</feature>
<feature type="binding site" evidence="1">
    <location>
        <begin position="12"/>
        <end position="19"/>
    </location>
    <ligand>
        <name>ATP</name>
        <dbReference type="ChEBI" id="CHEBI:30616"/>
    </ligand>
</feature>
<keyword id="KW-0067">ATP-binding</keyword>
<keyword id="KW-0119">Carbohydrate metabolism</keyword>
<keyword id="KW-0418">Kinase</keyword>
<keyword id="KW-0547">Nucleotide-binding</keyword>
<keyword id="KW-0808">Transferase</keyword>
<sequence length="366" mass="40035">METQLYIGIMSGTSMDGADAVLIRMDGGKWLGAEGHAFTPYPDRLRRKLLDLQDTGTDELHRSRMLSQELSRLYAQTVGELLNKQNLAPSDITALGCHGQTVRHAPEHGYSVQLADLPLLAELTQIFTVGDFRSRDLAAGGQGAPLVPAFHEALFRDDRETRAVLNIGGIANISVLPPDAPAFGFDTGPGNMLMDAWMQAHWQLPYDKNGAKAAQGNILPQLLDRLLAHPYFAQPHPKSTGRELFALNWLETYLDGGENRYDVLRTLSRFTAQTVFDAVSHAAADARQMYICGGGIRNPVLMADLAECFGTRVSLHSTAELNLDPQWVEAAAFAWMAACWVNRIPGSPHKATGASKPCILGAGYYY</sequence>
<evidence type="ECO:0000255" key="1">
    <source>
        <dbReference type="HAMAP-Rule" id="MF_01270"/>
    </source>
</evidence>
<reference key="1">
    <citation type="journal article" date="2008" name="Genomics">
        <title>Characterization of ST-4821 complex, a unique Neisseria meningitidis clone.</title>
        <authorList>
            <person name="Peng J."/>
            <person name="Yang L."/>
            <person name="Yang F."/>
            <person name="Yang J."/>
            <person name="Yan Y."/>
            <person name="Nie H."/>
            <person name="Zhang X."/>
            <person name="Xiong Z."/>
            <person name="Jiang Y."/>
            <person name="Cheng F."/>
            <person name="Xu X."/>
            <person name="Chen S."/>
            <person name="Sun L."/>
            <person name="Li W."/>
            <person name="Shen Y."/>
            <person name="Shao Z."/>
            <person name="Liang X."/>
            <person name="Xu J."/>
            <person name="Jin Q."/>
        </authorList>
    </citation>
    <scope>NUCLEOTIDE SEQUENCE [LARGE SCALE GENOMIC DNA]</scope>
    <source>
        <strain>053442</strain>
    </source>
</reference>
<comment type="function">
    <text evidence="1">Catalyzes the specific phosphorylation of 1,6-anhydro-N-acetylmuramic acid (anhMurNAc) with the simultaneous cleavage of the 1,6-anhydro ring, generating MurNAc-6-P. Is required for the utilization of anhMurNAc either imported from the medium or derived from its own cell wall murein, and thus plays a role in cell wall recycling.</text>
</comment>
<comment type="catalytic activity">
    <reaction evidence="1">
        <text>1,6-anhydro-N-acetyl-beta-muramate + ATP + H2O = N-acetyl-D-muramate 6-phosphate + ADP + H(+)</text>
        <dbReference type="Rhea" id="RHEA:24952"/>
        <dbReference type="ChEBI" id="CHEBI:15377"/>
        <dbReference type="ChEBI" id="CHEBI:15378"/>
        <dbReference type="ChEBI" id="CHEBI:30616"/>
        <dbReference type="ChEBI" id="CHEBI:58690"/>
        <dbReference type="ChEBI" id="CHEBI:58722"/>
        <dbReference type="ChEBI" id="CHEBI:456216"/>
        <dbReference type="EC" id="2.7.1.170"/>
    </reaction>
</comment>
<comment type="pathway">
    <text evidence="1">Amino-sugar metabolism; 1,6-anhydro-N-acetylmuramate degradation.</text>
</comment>
<comment type="pathway">
    <text evidence="1">Cell wall biogenesis; peptidoglycan recycling.</text>
</comment>
<comment type="similarity">
    <text evidence="1">Belongs to the anhydro-N-acetylmuramic acid kinase family.</text>
</comment>
<proteinExistence type="inferred from homology"/>
<accession>A9M2L4</accession>
<dbReference type="EC" id="2.7.1.170" evidence="1"/>
<dbReference type="EMBL" id="CP000381">
    <property type="protein sequence ID" value="ABX73906.1"/>
    <property type="molecule type" value="Genomic_DNA"/>
</dbReference>
<dbReference type="RefSeq" id="WP_012222013.1">
    <property type="nucleotide sequence ID" value="NC_010120.1"/>
</dbReference>
<dbReference type="SMR" id="A9M2L4"/>
<dbReference type="KEGG" id="nmn:NMCC_1765"/>
<dbReference type="HOGENOM" id="CLU_038782_0_0_4"/>
<dbReference type="UniPathway" id="UPA00343"/>
<dbReference type="UniPathway" id="UPA00544"/>
<dbReference type="Proteomes" id="UP000001177">
    <property type="component" value="Chromosome"/>
</dbReference>
<dbReference type="GO" id="GO:0005524">
    <property type="term" value="F:ATP binding"/>
    <property type="evidence" value="ECO:0007669"/>
    <property type="project" value="UniProtKB-UniRule"/>
</dbReference>
<dbReference type="GO" id="GO:0016301">
    <property type="term" value="F:kinase activity"/>
    <property type="evidence" value="ECO:0007669"/>
    <property type="project" value="UniProtKB-KW"/>
</dbReference>
<dbReference type="GO" id="GO:0016773">
    <property type="term" value="F:phosphotransferase activity, alcohol group as acceptor"/>
    <property type="evidence" value="ECO:0007669"/>
    <property type="project" value="UniProtKB-UniRule"/>
</dbReference>
<dbReference type="GO" id="GO:0097175">
    <property type="term" value="P:1,6-anhydro-N-acetyl-beta-muramic acid catabolic process"/>
    <property type="evidence" value="ECO:0007669"/>
    <property type="project" value="UniProtKB-UniRule"/>
</dbReference>
<dbReference type="GO" id="GO:0006040">
    <property type="term" value="P:amino sugar metabolic process"/>
    <property type="evidence" value="ECO:0007669"/>
    <property type="project" value="InterPro"/>
</dbReference>
<dbReference type="GO" id="GO:0009254">
    <property type="term" value="P:peptidoglycan turnover"/>
    <property type="evidence" value="ECO:0007669"/>
    <property type="project" value="UniProtKB-UniRule"/>
</dbReference>
<dbReference type="CDD" id="cd24050">
    <property type="entry name" value="ASKHA_NBD_ANMK"/>
    <property type="match status" value="1"/>
</dbReference>
<dbReference type="Gene3D" id="3.30.420.40">
    <property type="match status" value="2"/>
</dbReference>
<dbReference type="HAMAP" id="MF_01270">
    <property type="entry name" value="AnhMurNAc_kinase"/>
    <property type="match status" value="1"/>
</dbReference>
<dbReference type="InterPro" id="IPR005338">
    <property type="entry name" value="Anhydro_N_Ac-Mur_kinase"/>
</dbReference>
<dbReference type="InterPro" id="IPR043129">
    <property type="entry name" value="ATPase_NBD"/>
</dbReference>
<dbReference type="NCBIfam" id="NF007139">
    <property type="entry name" value="PRK09585.1-3"/>
    <property type="match status" value="1"/>
</dbReference>
<dbReference type="PANTHER" id="PTHR30605">
    <property type="entry name" value="ANHYDRO-N-ACETYLMURAMIC ACID KINASE"/>
    <property type="match status" value="1"/>
</dbReference>
<dbReference type="PANTHER" id="PTHR30605:SF0">
    <property type="entry name" value="ANHYDRO-N-ACETYLMURAMIC ACID KINASE"/>
    <property type="match status" value="1"/>
</dbReference>
<dbReference type="Pfam" id="PF03702">
    <property type="entry name" value="AnmK"/>
    <property type="match status" value="1"/>
</dbReference>
<dbReference type="SUPFAM" id="SSF53067">
    <property type="entry name" value="Actin-like ATPase domain"/>
    <property type="match status" value="1"/>
</dbReference>
<organism>
    <name type="scientific">Neisseria meningitidis serogroup C (strain 053442)</name>
    <dbReference type="NCBI Taxonomy" id="374833"/>
    <lineage>
        <taxon>Bacteria</taxon>
        <taxon>Pseudomonadati</taxon>
        <taxon>Pseudomonadota</taxon>
        <taxon>Betaproteobacteria</taxon>
        <taxon>Neisseriales</taxon>
        <taxon>Neisseriaceae</taxon>
        <taxon>Neisseria</taxon>
    </lineage>
</organism>
<gene>
    <name evidence="1" type="primary">anmK</name>
    <name type="ordered locus">NMCC_1765</name>
</gene>